<dbReference type="EC" id="3.1.1.1" evidence="1"/>
<dbReference type="EMBL" id="CU928164">
    <property type="protein sequence ID" value="CAR16551.1"/>
    <property type="molecule type" value="Genomic_DNA"/>
</dbReference>
<dbReference type="RefSeq" id="WP_000189541.1">
    <property type="nucleotide sequence ID" value="NC_011750.1"/>
</dbReference>
<dbReference type="RefSeq" id="YP_002406446.1">
    <property type="nucleotide sequence ID" value="NC_011750.1"/>
</dbReference>
<dbReference type="SMR" id="B7NK86"/>
<dbReference type="STRING" id="585057.ECIAI39_0412"/>
<dbReference type="ESTHER" id="ecoli-yafa">
    <property type="family name" value="Duf_1100-R"/>
</dbReference>
<dbReference type="GeneID" id="75170206"/>
<dbReference type="KEGG" id="ect:ECIAI39_0412"/>
<dbReference type="PATRIC" id="fig|585057.6.peg.442"/>
<dbReference type="HOGENOM" id="CLU_036819_0_0_6"/>
<dbReference type="Proteomes" id="UP000000749">
    <property type="component" value="Chromosome"/>
</dbReference>
<dbReference type="GO" id="GO:0106435">
    <property type="term" value="F:carboxylesterase activity"/>
    <property type="evidence" value="ECO:0007669"/>
    <property type="project" value="UniProtKB-EC"/>
</dbReference>
<dbReference type="FunFam" id="3.40.50.1820:FF:000022">
    <property type="entry name" value="Esterase FrsA"/>
    <property type="match status" value="1"/>
</dbReference>
<dbReference type="Gene3D" id="3.40.50.1820">
    <property type="entry name" value="alpha/beta hydrolase"/>
    <property type="match status" value="1"/>
</dbReference>
<dbReference type="HAMAP" id="MF_01063">
    <property type="entry name" value="FrsA"/>
    <property type="match status" value="1"/>
</dbReference>
<dbReference type="InterPro" id="IPR029058">
    <property type="entry name" value="AB_hydrolase_fold"/>
</dbReference>
<dbReference type="InterPro" id="IPR043423">
    <property type="entry name" value="FrsA"/>
</dbReference>
<dbReference type="InterPro" id="IPR010520">
    <property type="entry name" value="FrsA-like"/>
</dbReference>
<dbReference type="InterPro" id="IPR050261">
    <property type="entry name" value="FrsA_esterase"/>
</dbReference>
<dbReference type="NCBIfam" id="NF003460">
    <property type="entry name" value="PRK05077.1"/>
    <property type="match status" value="1"/>
</dbReference>
<dbReference type="PANTHER" id="PTHR22946">
    <property type="entry name" value="DIENELACTONE HYDROLASE DOMAIN-CONTAINING PROTEIN-RELATED"/>
    <property type="match status" value="1"/>
</dbReference>
<dbReference type="PANTHER" id="PTHR22946:SF4">
    <property type="entry name" value="ESTERASE FRSA"/>
    <property type="match status" value="1"/>
</dbReference>
<dbReference type="Pfam" id="PF06500">
    <property type="entry name" value="FrsA-like"/>
    <property type="match status" value="1"/>
</dbReference>
<dbReference type="SUPFAM" id="SSF53474">
    <property type="entry name" value="alpha/beta-Hydrolases"/>
    <property type="match status" value="1"/>
</dbReference>
<proteinExistence type="inferred from homology"/>
<comment type="function">
    <text evidence="1">Catalyzes the hydrolysis of esters.</text>
</comment>
<comment type="catalytic activity">
    <reaction evidence="1">
        <text>a carboxylic ester + H2O = an alcohol + a carboxylate + H(+)</text>
        <dbReference type="Rhea" id="RHEA:21164"/>
        <dbReference type="ChEBI" id="CHEBI:15377"/>
        <dbReference type="ChEBI" id="CHEBI:15378"/>
        <dbReference type="ChEBI" id="CHEBI:29067"/>
        <dbReference type="ChEBI" id="CHEBI:30879"/>
        <dbReference type="ChEBI" id="CHEBI:33308"/>
        <dbReference type="EC" id="3.1.1.1"/>
    </reaction>
</comment>
<comment type="similarity">
    <text evidence="1">Belongs to the FrsA family.</text>
</comment>
<feature type="chain" id="PRO_1000136511" description="Esterase FrsA">
    <location>
        <begin position="1"/>
        <end position="414"/>
    </location>
</feature>
<name>FRSA_ECO7I</name>
<organism>
    <name type="scientific">Escherichia coli O7:K1 (strain IAI39 / ExPEC)</name>
    <dbReference type="NCBI Taxonomy" id="585057"/>
    <lineage>
        <taxon>Bacteria</taxon>
        <taxon>Pseudomonadati</taxon>
        <taxon>Pseudomonadota</taxon>
        <taxon>Gammaproteobacteria</taxon>
        <taxon>Enterobacterales</taxon>
        <taxon>Enterobacteriaceae</taxon>
        <taxon>Escherichia</taxon>
    </lineage>
</organism>
<gene>
    <name evidence="1" type="primary">frsA</name>
    <name type="ordered locus">ECIAI39_0412</name>
</gene>
<keyword id="KW-0378">Hydrolase</keyword>
<keyword id="KW-0719">Serine esterase</keyword>
<sequence length="414" mass="47023">MTQANLSETLFKPRFKHPETSTLVRRFNHGAQPPVQSALDGKTIPHWYRMINRLMWIWRGIDPREILDVQARIVMSDAERTDDDLYDTVIGYRGGNWIYEWATQAMVWQQKACAEEDPQLSGRHWLHAATLYNIAAYPHLKGDDLAEQAQALSNRAYEEAAQRLPGTMRQMEFTVPGGAPITGFLHMPKGDGPFPTVLMCGGLDAMQTDYYSLYERYFAPRGIAMLTIDMPSVGFSSKWKLTQDSSLLHQHVLKALPNVPWVDHTRVAAFGFRFGANVAVRLAYLESPRLKAVACLGPVVHTLLSDFKCQQQVPEMYLDVLASRLGMHDASDEALRVELNRYSLKVQGLLGRRCPTPMLSGYWKNDPFSPEEDSRLITSSSADGKLLEIPFNPVYRNFDKGLQEITDWIEKRLC</sequence>
<evidence type="ECO:0000255" key="1">
    <source>
        <dbReference type="HAMAP-Rule" id="MF_01063"/>
    </source>
</evidence>
<protein>
    <recommendedName>
        <fullName evidence="1">Esterase FrsA</fullName>
        <ecNumber evidence="1">3.1.1.1</ecNumber>
    </recommendedName>
</protein>
<reference key="1">
    <citation type="journal article" date="2009" name="PLoS Genet.">
        <title>Organised genome dynamics in the Escherichia coli species results in highly diverse adaptive paths.</title>
        <authorList>
            <person name="Touchon M."/>
            <person name="Hoede C."/>
            <person name="Tenaillon O."/>
            <person name="Barbe V."/>
            <person name="Baeriswyl S."/>
            <person name="Bidet P."/>
            <person name="Bingen E."/>
            <person name="Bonacorsi S."/>
            <person name="Bouchier C."/>
            <person name="Bouvet O."/>
            <person name="Calteau A."/>
            <person name="Chiapello H."/>
            <person name="Clermont O."/>
            <person name="Cruveiller S."/>
            <person name="Danchin A."/>
            <person name="Diard M."/>
            <person name="Dossat C."/>
            <person name="Karoui M.E."/>
            <person name="Frapy E."/>
            <person name="Garry L."/>
            <person name="Ghigo J.M."/>
            <person name="Gilles A.M."/>
            <person name="Johnson J."/>
            <person name="Le Bouguenec C."/>
            <person name="Lescat M."/>
            <person name="Mangenot S."/>
            <person name="Martinez-Jehanne V."/>
            <person name="Matic I."/>
            <person name="Nassif X."/>
            <person name="Oztas S."/>
            <person name="Petit M.A."/>
            <person name="Pichon C."/>
            <person name="Rouy Z."/>
            <person name="Ruf C.S."/>
            <person name="Schneider D."/>
            <person name="Tourret J."/>
            <person name="Vacherie B."/>
            <person name="Vallenet D."/>
            <person name="Medigue C."/>
            <person name="Rocha E.P.C."/>
            <person name="Denamur E."/>
        </authorList>
    </citation>
    <scope>NUCLEOTIDE SEQUENCE [LARGE SCALE GENOMIC DNA]</scope>
    <source>
        <strain>IAI39 / ExPEC</strain>
    </source>
</reference>
<accession>B7NK86</accession>